<name>LYPA2_HUMAN</name>
<organism>
    <name type="scientific">Homo sapiens</name>
    <name type="common">Human</name>
    <dbReference type="NCBI Taxonomy" id="9606"/>
    <lineage>
        <taxon>Eukaryota</taxon>
        <taxon>Metazoa</taxon>
        <taxon>Chordata</taxon>
        <taxon>Craniata</taxon>
        <taxon>Vertebrata</taxon>
        <taxon>Euteleostomi</taxon>
        <taxon>Mammalia</taxon>
        <taxon>Eutheria</taxon>
        <taxon>Euarchontoglires</taxon>
        <taxon>Primates</taxon>
        <taxon>Haplorrhini</taxon>
        <taxon>Catarrhini</taxon>
        <taxon>Hominidae</taxon>
        <taxon>Homo</taxon>
    </lineage>
</organism>
<proteinExistence type="evidence at protein level"/>
<comment type="function">
    <text evidence="3 4 5">Acts as an acyl-protein thioesterase hydrolyzing fatty acids from S-acylated cysteine residues in proteins such as trimeric G alpha proteins, GSDMD, GAP43, ZDHHC6 or HRAS (PubMed:21152083, PubMed:28826475). Deacylates GAP43 (PubMed:21152083). Mediates depalmitoylation of ZDHHC6 (PubMed:28826475). Has lysophospholipase activity (PubMed:25301951). Hydrolyzes prostaglandin glycerol esters (PG-Gs) in the following order prostaglandin D2-glycerol ester (PGD2-G) &gt; prostaglandin E2 glycerol ester (PGE2-G) &gt; prostaglandin F2-alpha-glycerol ester (PGF2-alpha-G) (PubMed:25301951). Hydrolyzes 1-arachidonoylglycerol but not 2-arachidonoylglycerol or arachidonoylethanolamide (PubMed:25301951).</text>
</comment>
<comment type="catalytic activity">
    <reaction evidence="5">
        <text>S-hexadecanoyl-L-cysteinyl-[protein] + H2O = L-cysteinyl-[protein] + hexadecanoate + H(+)</text>
        <dbReference type="Rhea" id="RHEA:19233"/>
        <dbReference type="Rhea" id="RHEA-COMP:10131"/>
        <dbReference type="Rhea" id="RHEA-COMP:11032"/>
        <dbReference type="ChEBI" id="CHEBI:7896"/>
        <dbReference type="ChEBI" id="CHEBI:15377"/>
        <dbReference type="ChEBI" id="CHEBI:15378"/>
        <dbReference type="ChEBI" id="CHEBI:29950"/>
        <dbReference type="ChEBI" id="CHEBI:74151"/>
        <dbReference type="EC" id="3.1.2.22"/>
    </reaction>
</comment>
<comment type="catalytic activity">
    <reaction evidence="4">
        <text>prostaglandin E2 1-glyceryl ester + H2O = prostaglandin E2 + glycerol + H(+)</text>
        <dbReference type="Rhea" id="RHEA:48296"/>
        <dbReference type="ChEBI" id="CHEBI:15377"/>
        <dbReference type="ChEBI" id="CHEBI:15378"/>
        <dbReference type="ChEBI" id="CHEBI:17754"/>
        <dbReference type="ChEBI" id="CHEBI:90230"/>
        <dbReference type="ChEBI" id="CHEBI:606564"/>
    </reaction>
    <physiologicalReaction direction="left-to-right" evidence="7">
        <dbReference type="Rhea" id="RHEA:48297"/>
    </physiologicalReaction>
</comment>
<comment type="catalytic activity">
    <reaction evidence="4">
        <text>1-hexadecanoyl-sn-glycero-3-phosphocholine + H2O = sn-glycerol 3-phosphocholine + hexadecanoate + H(+)</text>
        <dbReference type="Rhea" id="RHEA:40435"/>
        <dbReference type="ChEBI" id="CHEBI:7896"/>
        <dbReference type="ChEBI" id="CHEBI:15377"/>
        <dbReference type="ChEBI" id="CHEBI:15378"/>
        <dbReference type="ChEBI" id="CHEBI:16870"/>
        <dbReference type="ChEBI" id="CHEBI:72998"/>
    </reaction>
    <physiologicalReaction direction="left-to-right" evidence="7">
        <dbReference type="Rhea" id="RHEA:40436"/>
    </physiologicalReaction>
</comment>
<comment type="catalytic activity">
    <reaction evidence="4">
        <text>1-octadecanoyl-sn-glycero-3-phosphocholine + H2O = octadecanoate + sn-glycerol 3-phosphocholine + H(+)</text>
        <dbReference type="Rhea" id="RHEA:40887"/>
        <dbReference type="ChEBI" id="CHEBI:15377"/>
        <dbReference type="ChEBI" id="CHEBI:15378"/>
        <dbReference type="ChEBI" id="CHEBI:16870"/>
        <dbReference type="ChEBI" id="CHEBI:25629"/>
        <dbReference type="ChEBI" id="CHEBI:73858"/>
    </reaction>
    <physiologicalReaction direction="left-to-right" evidence="7">
        <dbReference type="Rhea" id="RHEA:40888"/>
    </physiologicalReaction>
</comment>
<comment type="catalytic activity">
    <reaction evidence="4">
        <text>1-hexadecanoyl-sn-glycero-3-phosphate + H2O = sn-glycerol 3-phosphate + hexadecanoate + H(+)</text>
        <dbReference type="Rhea" id="RHEA:49092"/>
        <dbReference type="ChEBI" id="CHEBI:7896"/>
        <dbReference type="ChEBI" id="CHEBI:15377"/>
        <dbReference type="ChEBI" id="CHEBI:15378"/>
        <dbReference type="ChEBI" id="CHEBI:57518"/>
        <dbReference type="ChEBI" id="CHEBI:57597"/>
    </reaction>
    <physiologicalReaction direction="left-to-right" evidence="7">
        <dbReference type="Rhea" id="RHEA:49093"/>
    </physiologicalReaction>
</comment>
<comment type="catalytic activity">
    <reaction evidence="4">
        <text>1-hexadecanoyl-sn-glycero-3-phospho-L-serine + H2O = sn-glycero-3-phospho-L-serine + hexadecanoate + H(+)</text>
        <dbReference type="Rhea" id="RHEA:44552"/>
        <dbReference type="ChEBI" id="CHEBI:7896"/>
        <dbReference type="ChEBI" id="CHEBI:15377"/>
        <dbReference type="ChEBI" id="CHEBI:15378"/>
        <dbReference type="ChEBI" id="CHEBI:64765"/>
        <dbReference type="ChEBI" id="CHEBI:75020"/>
    </reaction>
    <physiologicalReaction direction="left-to-right" evidence="7">
        <dbReference type="Rhea" id="RHEA:44553"/>
    </physiologicalReaction>
</comment>
<comment type="activity regulation">
    <text evidence="4">Inhibited by compound 1 or (5,5-Dioxido-4H-thieno[3,2-c]thiochromen-2-yl)(4-(4-methoxyphenyl)piperazin-1-yl)methanone.</text>
</comment>
<comment type="biophysicochemical properties">
    <kinetics>
        <KM evidence="4">67 uM for prostaglandin D2-glycerol ester (PGD2-G)</KM>
        <KM evidence="4">13 uM for prostaglandin E2-glycerol ester (PGE2-G)</KM>
        <KM evidence="4">5 uM for prostaglandin F2-alpha-glycerol ester (PGF2-alpha-G)</KM>
        <KM evidence="4">8.3 uM for Lyso-PC (C16:0)</KM>
        <KM evidence="4">7.8 uM for Lyso-PC (C18:0)</KM>
        <KM evidence="4">40.7 uM for Lyso-PC (C18:1)</KM>
        <KM evidence="4">11.1 uM for Lyso-PA (C16:0)</KM>
        <KM evidence="4">13.3 uM for Lyso-PS (C16:0)</KM>
        <KM evidence="4">7.6 uM for 1-arachidonoylglycerol</KM>
    </kinetics>
</comment>
<comment type="interaction">
    <interactant intactId="EBI-715999">
        <id>O95372</id>
    </interactant>
    <interactant intactId="EBI-6509505">
        <id>Q0VD86</id>
        <label>INCA1</label>
    </interactant>
    <organismsDiffer>false</organismsDiffer>
    <experiments>3</experiments>
</comment>
<comment type="subcellular location">
    <subcellularLocation>
        <location evidence="4">Cytoplasm</location>
    </subcellularLocation>
</comment>
<comment type="tissue specificity">
    <text evidence="4">Expressed in various breast cancer cell lines.</text>
</comment>
<comment type="similarity">
    <text evidence="6">Belongs to the AB hydrolase superfamily. AB hydrolase 2 family.</text>
</comment>
<comment type="sequence caution" evidence="6">
    <conflict type="frameshift">
        <sequence resource="EMBL-CDS" id="AAP97210"/>
    </conflict>
</comment>
<evidence type="ECO:0000250" key="1">
    <source>
        <dbReference type="UniProtKB" id="O75608"/>
    </source>
</evidence>
<evidence type="ECO:0000250" key="2">
    <source>
        <dbReference type="UniProtKB" id="Q9QYL8"/>
    </source>
</evidence>
<evidence type="ECO:0000269" key="3">
    <source>
    </source>
</evidence>
<evidence type="ECO:0000269" key="4">
    <source>
    </source>
</evidence>
<evidence type="ECO:0000269" key="5">
    <source>
    </source>
</evidence>
<evidence type="ECO:0000305" key="6"/>
<evidence type="ECO:0000305" key="7">
    <source>
    </source>
</evidence>
<evidence type="ECO:0000305" key="8">
    <source>
    </source>
</evidence>
<evidence type="ECO:0007829" key="9">
    <source>
        <dbReference type="PDB" id="5SYN"/>
    </source>
</evidence>
<evidence type="ECO:0007829" key="10">
    <source>
        <dbReference type="PDB" id="6BJE"/>
    </source>
</evidence>
<feature type="chain" id="PRO_0000102271" description="Acyl-protein thioesterase 2">
    <location>
        <begin position="1"/>
        <end position="231"/>
    </location>
</feature>
<feature type="active site" description="Charge relay system" evidence="8">
    <location>
        <position position="122"/>
    </location>
</feature>
<feature type="active site" description="Charge relay system" evidence="1">
    <location>
        <position position="176"/>
    </location>
</feature>
<feature type="active site" description="Charge relay system" evidence="1">
    <location>
        <position position="210"/>
    </location>
</feature>
<feature type="modified residue" description="Phosphoserine" evidence="2">
    <location>
        <position position="82"/>
    </location>
</feature>
<feature type="lipid moiety-binding region" description="S-palmitoyl cysteine" evidence="5">
    <location>
        <position position="2"/>
    </location>
</feature>
<feature type="mutagenesis site" description="Abolishes palmitoylation." evidence="5">
    <original>C</original>
    <variation>A</variation>
    <location>
        <position position="2"/>
    </location>
</feature>
<feature type="mutagenesis site" description="Abolishes ability to mediate depalmitoylation of ZDHHC6." evidence="5">
    <original>S</original>
    <variation>A</variation>
    <location>
        <position position="122"/>
    </location>
</feature>
<feature type="strand" evidence="9">
    <location>
        <begin position="11"/>
        <end position="17"/>
    </location>
</feature>
<feature type="strand" evidence="9">
    <location>
        <begin position="25"/>
        <end position="30"/>
    </location>
</feature>
<feature type="strand" evidence="10">
    <location>
        <begin position="33"/>
        <end position="35"/>
    </location>
</feature>
<feature type="helix" evidence="9">
    <location>
        <begin position="38"/>
        <end position="45"/>
    </location>
</feature>
<feature type="strand" evidence="9">
    <location>
        <begin position="52"/>
        <end position="57"/>
    </location>
</feature>
<feature type="strand" evidence="9">
    <location>
        <begin position="61"/>
        <end position="63"/>
    </location>
</feature>
<feature type="helix" evidence="9">
    <location>
        <begin position="65"/>
        <end position="67"/>
    </location>
</feature>
<feature type="strand" evidence="9">
    <location>
        <begin position="71"/>
        <end position="73"/>
    </location>
</feature>
<feature type="helix" evidence="9">
    <location>
        <begin position="89"/>
        <end position="108"/>
    </location>
</feature>
<feature type="helix" evidence="9">
    <location>
        <begin position="113"/>
        <end position="115"/>
    </location>
</feature>
<feature type="strand" evidence="9">
    <location>
        <begin position="116"/>
        <end position="121"/>
    </location>
</feature>
<feature type="helix" evidence="9">
    <location>
        <begin position="123"/>
        <end position="133"/>
    </location>
</feature>
<feature type="strand" evidence="9">
    <location>
        <begin position="140"/>
        <end position="146"/>
    </location>
</feature>
<feature type="helix" evidence="9">
    <location>
        <begin position="152"/>
        <end position="154"/>
    </location>
</feature>
<feature type="turn" evidence="9">
    <location>
        <begin position="155"/>
        <end position="158"/>
    </location>
</feature>
<feature type="helix" evidence="9">
    <location>
        <begin position="161"/>
        <end position="165"/>
    </location>
</feature>
<feature type="strand" evidence="9">
    <location>
        <begin position="167"/>
        <end position="173"/>
    </location>
</feature>
<feature type="strand" evidence="9">
    <location>
        <begin position="177"/>
        <end position="179"/>
    </location>
</feature>
<feature type="helix" evidence="9">
    <location>
        <begin position="181"/>
        <end position="192"/>
    </location>
</feature>
<feature type="helix" evidence="9">
    <location>
        <begin position="197"/>
        <end position="199"/>
    </location>
</feature>
<feature type="strand" evidence="9">
    <location>
        <begin position="200"/>
        <end position="205"/>
    </location>
</feature>
<feature type="helix" evidence="9">
    <location>
        <begin position="214"/>
        <end position="227"/>
    </location>
</feature>
<dbReference type="EC" id="3.1.2.-" evidence="5"/>
<dbReference type="EC" id="3.1.2.22" evidence="5"/>
<dbReference type="EMBL" id="AF098668">
    <property type="protein sequence ID" value="AAC72844.1"/>
    <property type="molecule type" value="mRNA"/>
</dbReference>
<dbReference type="EMBL" id="AF090423">
    <property type="protein sequence ID" value="AAP97210.1"/>
    <property type="status" value="ALT_FRAME"/>
    <property type="molecule type" value="mRNA"/>
</dbReference>
<dbReference type="EMBL" id="AL031295">
    <property type="status" value="NOT_ANNOTATED_CDS"/>
    <property type="molecule type" value="Genomic_DNA"/>
</dbReference>
<dbReference type="EMBL" id="BC017034">
    <property type="protein sequence ID" value="AAH17034.1"/>
    <property type="molecule type" value="mRNA"/>
</dbReference>
<dbReference type="EMBL" id="BC017193">
    <property type="protein sequence ID" value="AAH17193.1"/>
    <property type="molecule type" value="mRNA"/>
</dbReference>
<dbReference type="CCDS" id="CCDS241.1"/>
<dbReference type="RefSeq" id="NP_009191.1">
    <property type="nucleotide sequence ID" value="NM_007260.3"/>
</dbReference>
<dbReference type="PDB" id="5SYN">
    <property type="method" value="X-ray"/>
    <property type="resolution" value="1.64 A"/>
    <property type="chains" value="A/B/C/D=1-231"/>
</dbReference>
<dbReference type="PDB" id="6BJE">
    <property type="method" value="X-ray"/>
    <property type="resolution" value="2.70 A"/>
    <property type="chains" value="A/B=10-231"/>
</dbReference>
<dbReference type="PDBsum" id="5SYN"/>
<dbReference type="PDBsum" id="6BJE"/>
<dbReference type="SMR" id="O95372"/>
<dbReference type="BioGRID" id="116444">
    <property type="interactions" value="68"/>
</dbReference>
<dbReference type="FunCoup" id="O95372">
    <property type="interactions" value="2079"/>
</dbReference>
<dbReference type="IntAct" id="O95372">
    <property type="interactions" value="23"/>
</dbReference>
<dbReference type="MINT" id="O95372"/>
<dbReference type="STRING" id="9606.ENSP00000363638"/>
<dbReference type="BindingDB" id="O95372"/>
<dbReference type="ChEMBL" id="CHEMBL1932891"/>
<dbReference type="GuidetoPHARMACOLOGY" id="3291"/>
<dbReference type="SwissLipids" id="SLP:000001479"/>
<dbReference type="ESTHER" id="human-LYPLA2">
    <property type="family name" value="LYsophospholipase_carboxylesterase"/>
</dbReference>
<dbReference type="MEROPS" id="S09.025"/>
<dbReference type="GlyGen" id="O95372">
    <property type="glycosylation" value="2 sites, 1 O-linked glycan (1 site)"/>
</dbReference>
<dbReference type="iPTMnet" id="O95372"/>
<dbReference type="MetOSite" id="O95372"/>
<dbReference type="PhosphoSitePlus" id="O95372"/>
<dbReference type="SwissPalm" id="O95372"/>
<dbReference type="BioMuta" id="LYPLA2"/>
<dbReference type="OGP" id="O95372"/>
<dbReference type="jPOST" id="O95372"/>
<dbReference type="MassIVE" id="O95372"/>
<dbReference type="PaxDb" id="9606-ENSP00000363638"/>
<dbReference type="PeptideAtlas" id="O95372"/>
<dbReference type="ProteomicsDB" id="50827"/>
<dbReference type="Pumba" id="O95372"/>
<dbReference type="Antibodypedia" id="30196">
    <property type="antibodies" value="172 antibodies from 26 providers"/>
</dbReference>
<dbReference type="DNASU" id="11313"/>
<dbReference type="Ensembl" id="ENST00000374514.8">
    <property type="protein sequence ID" value="ENSP00000363638.3"/>
    <property type="gene ID" value="ENSG00000011009.12"/>
</dbReference>
<dbReference type="GeneID" id="11313"/>
<dbReference type="KEGG" id="hsa:11313"/>
<dbReference type="MANE-Select" id="ENST00000374514.8">
    <property type="protein sequence ID" value="ENSP00000363638.3"/>
    <property type="RefSeq nucleotide sequence ID" value="NM_007260.3"/>
    <property type="RefSeq protein sequence ID" value="NP_009191.1"/>
</dbReference>
<dbReference type="UCSC" id="uc001bht.4">
    <property type="organism name" value="human"/>
</dbReference>
<dbReference type="AGR" id="HGNC:6738"/>
<dbReference type="CTD" id="11313"/>
<dbReference type="DisGeNET" id="11313"/>
<dbReference type="GeneCards" id="LYPLA2"/>
<dbReference type="HGNC" id="HGNC:6738">
    <property type="gene designation" value="LYPLA2"/>
</dbReference>
<dbReference type="HPA" id="ENSG00000011009">
    <property type="expression patterns" value="Tissue enhanced (choroid)"/>
</dbReference>
<dbReference type="neXtProt" id="NX_O95372"/>
<dbReference type="OpenTargets" id="ENSG00000011009"/>
<dbReference type="PharmGKB" id="PA30500"/>
<dbReference type="VEuPathDB" id="HostDB:ENSG00000011009"/>
<dbReference type="eggNOG" id="KOG2112">
    <property type="taxonomic scope" value="Eukaryota"/>
</dbReference>
<dbReference type="GeneTree" id="ENSGT00940000156197"/>
<dbReference type="HOGENOM" id="CLU_049413_3_5_1"/>
<dbReference type="InParanoid" id="O95372"/>
<dbReference type="OMA" id="WYDILAM"/>
<dbReference type="OrthoDB" id="2418081at2759"/>
<dbReference type="PAN-GO" id="O95372">
    <property type="GO annotations" value="4 GO annotations based on evolutionary models"/>
</dbReference>
<dbReference type="PhylomeDB" id="O95372"/>
<dbReference type="TreeFam" id="TF314619"/>
<dbReference type="PathwayCommons" id="O95372"/>
<dbReference type="Reactome" id="R-HSA-373760">
    <property type="pathway name" value="L1CAM interactions"/>
</dbReference>
<dbReference type="SignaLink" id="O95372"/>
<dbReference type="SIGNOR" id="O95372"/>
<dbReference type="BioGRID-ORCS" id="11313">
    <property type="hits" value="28 hits in 1153 CRISPR screens"/>
</dbReference>
<dbReference type="ChiTaRS" id="LYPLA2">
    <property type="organism name" value="human"/>
</dbReference>
<dbReference type="GenomeRNAi" id="11313"/>
<dbReference type="Pharos" id="O95372">
    <property type="development level" value="Tchem"/>
</dbReference>
<dbReference type="PRO" id="PR:O95372"/>
<dbReference type="Proteomes" id="UP000005640">
    <property type="component" value="Chromosome 1"/>
</dbReference>
<dbReference type="RNAct" id="O95372">
    <property type="molecule type" value="protein"/>
</dbReference>
<dbReference type="Bgee" id="ENSG00000011009">
    <property type="expression patterns" value="Expressed in lower esophagus mucosa and 190 other cell types or tissues"/>
</dbReference>
<dbReference type="ExpressionAtlas" id="O95372">
    <property type="expression patterns" value="baseline and differential"/>
</dbReference>
<dbReference type="GO" id="GO:0005737">
    <property type="term" value="C:cytoplasm"/>
    <property type="evidence" value="ECO:0000314"/>
    <property type="project" value="BHF-UCL"/>
</dbReference>
<dbReference type="GO" id="GO:0005829">
    <property type="term" value="C:cytosol"/>
    <property type="evidence" value="ECO:0000314"/>
    <property type="project" value="FlyBase"/>
</dbReference>
<dbReference type="GO" id="GO:0070062">
    <property type="term" value="C:extracellular exosome"/>
    <property type="evidence" value="ECO:0007005"/>
    <property type="project" value="UniProtKB"/>
</dbReference>
<dbReference type="GO" id="GO:0005795">
    <property type="term" value="C:Golgi stack"/>
    <property type="evidence" value="ECO:0007669"/>
    <property type="project" value="Ensembl"/>
</dbReference>
<dbReference type="GO" id="GO:0005654">
    <property type="term" value="C:nucleoplasm"/>
    <property type="evidence" value="ECO:0000314"/>
    <property type="project" value="HPA"/>
</dbReference>
<dbReference type="GO" id="GO:0045296">
    <property type="term" value="F:cadherin binding"/>
    <property type="evidence" value="ECO:0007005"/>
    <property type="project" value="BHF-UCL"/>
</dbReference>
<dbReference type="GO" id="GO:0052689">
    <property type="term" value="F:carboxylic ester hydrolase activity"/>
    <property type="evidence" value="ECO:0000318"/>
    <property type="project" value="GO_Central"/>
</dbReference>
<dbReference type="GO" id="GO:0004622">
    <property type="term" value="F:lysophospholipase activity"/>
    <property type="evidence" value="ECO:0000314"/>
    <property type="project" value="UniProtKB"/>
</dbReference>
<dbReference type="GO" id="GO:0008474">
    <property type="term" value="F:palmitoyl-(protein) hydrolase activity"/>
    <property type="evidence" value="ECO:0000314"/>
    <property type="project" value="UniProtKB"/>
</dbReference>
<dbReference type="GO" id="GO:0046464">
    <property type="term" value="P:acylglycerol catabolic process"/>
    <property type="evidence" value="ECO:0000314"/>
    <property type="project" value="UniProtKB"/>
</dbReference>
<dbReference type="GO" id="GO:0007411">
    <property type="term" value="P:axon guidance"/>
    <property type="evidence" value="ECO:0000304"/>
    <property type="project" value="Reactome"/>
</dbReference>
<dbReference type="GO" id="GO:0006631">
    <property type="term" value="P:fatty acid metabolic process"/>
    <property type="evidence" value="ECO:0007669"/>
    <property type="project" value="UniProtKB-KW"/>
</dbReference>
<dbReference type="GO" id="GO:1905344">
    <property type="term" value="P:prostaglandin catabolic process"/>
    <property type="evidence" value="ECO:0000314"/>
    <property type="project" value="UniProtKB"/>
</dbReference>
<dbReference type="GO" id="GO:0002084">
    <property type="term" value="P:protein depalmitoylation"/>
    <property type="evidence" value="ECO:0000314"/>
    <property type="project" value="UniProtKB"/>
</dbReference>
<dbReference type="FunFam" id="3.40.50.1820:FF:000010">
    <property type="entry name" value="Acyl-protein thioesterase 2"/>
    <property type="match status" value="1"/>
</dbReference>
<dbReference type="Gene3D" id="3.40.50.1820">
    <property type="entry name" value="alpha/beta hydrolase"/>
    <property type="match status" value="1"/>
</dbReference>
<dbReference type="InterPro" id="IPR029058">
    <property type="entry name" value="AB_hydrolase_fold"/>
</dbReference>
<dbReference type="InterPro" id="IPR050565">
    <property type="entry name" value="LYPA1-2/EST-like"/>
</dbReference>
<dbReference type="InterPro" id="IPR003140">
    <property type="entry name" value="PLipase/COase/thioEstase"/>
</dbReference>
<dbReference type="PANTHER" id="PTHR10655:SF13">
    <property type="entry name" value="ACYL-PROTEIN THIOESTERASE 2"/>
    <property type="match status" value="1"/>
</dbReference>
<dbReference type="PANTHER" id="PTHR10655">
    <property type="entry name" value="LYSOPHOSPHOLIPASE-RELATED"/>
    <property type="match status" value="1"/>
</dbReference>
<dbReference type="Pfam" id="PF02230">
    <property type="entry name" value="Abhydrolase_2"/>
    <property type="match status" value="1"/>
</dbReference>
<dbReference type="SUPFAM" id="SSF53474">
    <property type="entry name" value="alpha/beta-Hydrolases"/>
    <property type="match status" value="1"/>
</dbReference>
<sequence>MCGNTMSVPLLTDAATVSGAERETAAVIFLHGLGDTGHSWADALSTIRLPHVKYICPHAPRIPVTLNMKMVMPSWFDLMGLSPDAPEDEAGIKKAAENIKALIEHEMKNGIPANRIVLGGFSQGGALSLYTALTCPHPLAGIVALSCWLPLHRAFPQAANGSAKDLAILQCHGELDPMVPVRFGALTAEKLRSVVTPARVQFKTYPGVMHSSCPQEMAAVKEFLEKLLPPV</sequence>
<gene>
    <name type="primary">LYPLA2</name>
    <name type="synonym">APT2</name>
</gene>
<protein>
    <recommendedName>
        <fullName>Acyl-protein thioesterase 2</fullName>
        <shortName>APT-2</shortName>
        <ecNumber evidence="5">3.1.2.-</ecNumber>
    </recommendedName>
    <alternativeName>
        <fullName>Lysophospholipase II</fullName>
        <shortName>LPL-II</shortName>
        <shortName>LysoPLA II</shortName>
    </alternativeName>
    <alternativeName>
        <fullName evidence="6">Palmitoyl-protein hydrolase</fullName>
        <ecNumber evidence="5">3.1.2.22</ecNumber>
    </alternativeName>
</protein>
<reference key="1">
    <citation type="submission" date="1998-10" db="EMBL/GenBank/DDBJ databases">
        <authorList>
            <person name="Kuznetsov S.R."/>
            <person name="Jones T.L.Z."/>
        </authorList>
    </citation>
    <scope>NUCLEOTIDE SEQUENCE [MRNA]</scope>
    <source>
        <tissue>Testis</tissue>
    </source>
</reference>
<reference key="2">
    <citation type="submission" date="1998-09" db="EMBL/GenBank/DDBJ databases">
        <title>Cloning and expression of a novel human cDNA homology to murine lysophospholipase I mRNA.</title>
        <authorList>
            <person name="Yue P."/>
            <person name="Yu L."/>
            <person name="Tu Q."/>
            <person name="Ding J.B."/>
            <person name="Fu S.N."/>
            <person name="Zhao S.Y."/>
        </authorList>
    </citation>
    <scope>NUCLEOTIDE SEQUENCE [MRNA]</scope>
</reference>
<reference key="3">
    <citation type="journal article" date="2006" name="Nature">
        <title>The DNA sequence and biological annotation of human chromosome 1.</title>
        <authorList>
            <person name="Gregory S.G."/>
            <person name="Barlow K.F."/>
            <person name="McLay K.E."/>
            <person name="Kaul R."/>
            <person name="Swarbreck D."/>
            <person name="Dunham A."/>
            <person name="Scott C.E."/>
            <person name="Howe K.L."/>
            <person name="Woodfine K."/>
            <person name="Spencer C.C.A."/>
            <person name="Jones M.C."/>
            <person name="Gillson C."/>
            <person name="Searle S."/>
            <person name="Zhou Y."/>
            <person name="Kokocinski F."/>
            <person name="McDonald L."/>
            <person name="Evans R."/>
            <person name="Phillips K."/>
            <person name="Atkinson A."/>
            <person name="Cooper R."/>
            <person name="Jones C."/>
            <person name="Hall R.E."/>
            <person name="Andrews T.D."/>
            <person name="Lloyd C."/>
            <person name="Ainscough R."/>
            <person name="Almeida J.P."/>
            <person name="Ambrose K.D."/>
            <person name="Anderson F."/>
            <person name="Andrew R.W."/>
            <person name="Ashwell R.I.S."/>
            <person name="Aubin K."/>
            <person name="Babbage A.K."/>
            <person name="Bagguley C.L."/>
            <person name="Bailey J."/>
            <person name="Beasley H."/>
            <person name="Bethel G."/>
            <person name="Bird C.P."/>
            <person name="Bray-Allen S."/>
            <person name="Brown J.Y."/>
            <person name="Brown A.J."/>
            <person name="Buckley D."/>
            <person name="Burton J."/>
            <person name="Bye J."/>
            <person name="Carder C."/>
            <person name="Chapman J.C."/>
            <person name="Clark S.Y."/>
            <person name="Clarke G."/>
            <person name="Clee C."/>
            <person name="Cobley V."/>
            <person name="Collier R.E."/>
            <person name="Corby N."/>
            <person name="Coville G.J."/>
            <person name="Davies J."/>
            <person name="Deadman R."/>
            <person name="Dunn M."/>
            <person name="Earthrowl M."/>
            <person name="Ellington A.G."/>
            <person name="Errington H."/>
            <person name="Frankish A."/>
            <person name="Frankland J."/>
            <person name="French L."/>
            <person name="Garner P."/>
            <person name="Garnett J."/>
            <person name="Gay L."/>
            <person name="Ghori M.R.J."/>
            <person name="Gibson R."/>
            <person name="Gilby L.M."/>
            <person name="Gillett W."/>
            <person name="Glithero R.J."/>
            <person name="Grafham D.V."/>
            <person name="Griffiths C."/>
            <person name="Griffiths-Jones S."/>
            <person name="Grocock R."/>
            <person name="Hammond S."/>
            <person name="Harrison E.S.I."/>
            <person name="Hart E."/>
            <person name="Haugen E."/>
            <person name="Heath P.D."/>
            <person name="Holmes S."/>
            <person name="Holt K."/>
            <person name="Howden P.J."/>
            <person name="Hunt A.R."/>
            <person name="Hunt S.E."/>
            <person name="Hunter G."/>
            <person name="Isherwood J."/>
            <person name="James R."/>
            <person name="Johnson C."/>
            <person name="Johnson D."/>
            <person name="Joy A."/>
            <person name="Kay M."/>
            <person name="Kershaw J.K."/>
            <person name="Kibukawa M."/>
            <person name="Kimberley A.M."/>
            <person name="King A."/>
            <person name="Knights A.J."/>
            <person name="Lad H."/>
            <person name="Laird G."/>
            <person name="Lawlor S."/>
            <person name="Leongamornlert D.A."/>
            <person name="Lloyd D.M."/>
            <person name="Loveland J."/>
            <person name="Lovell J."/>
            <person name="Lush M.J."/>
            <person name="Lyne R."/>
            <person name="Martin S."/>
            <person name="Mashreghi-Mohammadi M."/>
            <person name="Matthews L."/>
            <person name="Matthews N.S.W."/>
            <person name="McLaren S."/>
            <person name="Milne S."/>
            <person name="Mistry S."/>
            <person name="Moore M.J.F."/>
            <person name="Nickerson T."/>
            <person name="O'Dell C.N."/>
            <person name="Oliver K."/>
            <person name="Palmeiri A."/>
            <person name="Palmer S.A."/>
            <person name="Parker A."/>
            <person name="Patel D."/>
            <person name="Pearce A.V."/>
            <person name="Peck A.I."/>
            <person name="Pelan S."/>
            <person name="Phelps K."/>
            <person name="Phillimore B.J."/>
            <person name="Plumb R."/>
            <person name="Rajan J."/>
            <person name="Raymond C."/>
            <person name="Rouse G."/>
            <person name="Saenphimmachak C."/>
            <person name="Sehra H.K."/>
            <person name="Sheridan E."/>
            <person name="Shownkeen R."/>
            <person name="Sims S."/>
            <person name="Skuce C.D."/>
            <person name="Smith M."/>
            <person name="Steward C."/>
            <person name="Subramanian S."/>
            <person name="Sycamore N."/>
            <person name="Tracey A."/>
            <person name="Tromans A."/>
            <person name="Van Helmond Z."/>
            <person name="Wall M."/>
            <person name="Wallis J.M."/>
            <person name="White S."/>
            <person name="Whitehead S.L."/>
            <person name="Wilkinson J.E."/>
            <person name="Willey D.L."/>
            <person name="Williams H."/>
            <person name="Wilming L."/>
            <person name="Wray P.W."/>
            <person name="Wu Z."/>
            <person name="Coulson A."/>
            <person name="Vaudin M."/>
            <person name="Sulston J.E."/>
            <person name="Durbin R.M."/>
            <person name="Hubbard T."/>
            <person name="Wooster R."/>
            <person name="Dunham I."/>
            <person name="Carter N.P."/>
            <person name="McVean G."/>
            <person name="Ross M.T."/>
            <person name="Harrow J."/>
            <person name="Olson M.V."/>
            <person name="Beck S."/>
            <person name="Rogers J."/>
            <person name="Bentley D.R."/>
        </authorList>
    </citation>
    <scope>NUCLEOTIDE SEQUENCE [LARGE SCALE GENOMIC DNA]</scope>
</reference>
<reference key="4">
    <citation type="journal article" date="2004" name="Genome Res.">
        <title>The status, quality, and expansion of the NIH full-length cDNA project: the Mammalian Gene Collection (MGC).</title>
        <authorList>
            <consortium name="The MGC Project Team"/>
        </authorList>
    </citation>
    <scope>NUCLEOTIDE SEQUENCE [LARGE SCALE MRNA]</scope>
    <source>
        <tissue>Colon</tissue>
        <tissue>Placenta</tissue>
    </source>
</reference>
<reference key="5">
    <citation type="journal article" date="2010" name="PLoS ONE">
        <title>Acyl-protein thioesterase 2 catalyzes the deacylation of peripheral membrane-associated GAP-43.</title>
        <authorList>
            <person name="Tomatis V.M."/>
            <person name="Trenchi A."/>
            <person name="Gomez G.A."/>
            <person name="Daniotti J.L."/>
        </authorList>
    </citation>
    <scope>FUNCTION IN DEACYLATION OF GAP43</scope>
</reference>
<reference key="6">
    <citation type="journal article" date="2011" name="BMC Syst. Biol.">
        <title>Initial characterization of the human central proteome.</title>
        <authorList>
            <person name="Burkard T.R."/>
            <person name="Planyavsky M."/>
            <person name="Kaupe I."/>
            <person name="Breitwieser F.P."/>
            <person name="Buerckstuemmer T."/>
            <person name="Bennett K.L."/>
            <person name="Superti-Furga G."/>
            <person name="Colinge J."/>
        </authorList>
    </citation>
    <scope>IDENTIFICATION BY MASS SPECTROMETRY [LARGE SCALE ANALYSIS]</scope>
</reference>
<reference key="7">
    <citation type="journal article" date="2014" name="J. Biol. Chem.">
        <title>Identification of the major prostaglandin glycerol ester hydrolase in human cancer cells.</title>
        <authorList>
            <person name="Manna J.D."/>
            <person name="Wepy J.A."/>
            <person name="Hsu K.L."/>
            <person name="Chang J.W."/>
            <person name="Cravatt B.F."/>
            <person name="Marnett L.J."/>
        </authorList>
    </citation>
    <scope>FUNCTION</scope>
    <scope>CATALYTIC ACTIVITY</scope>
    <scope>SUBCELLULAR LOCATION</scope>
    <scope>BIOPHYSICOCHEMICAL PROPERTIES</scope>
    <scope>ACTIVITY REGULATION</scope>
    <scope>TISSUE SPECIFICITY</scope>
</reference>
<reference key="8">
    <citation type="journal article" date="2015" name="Proteomics">
        <title>N-terminome analysis of the human mitochondrial proteome.</title>
        <authorList>
            <person name="Vaca Jacome A.S."/>
            <person name="Rabilloud T."/>
            <person name="Schaeffer-Reiss C."/>
            <person name="Rompais M."/>
            <person name="Ayoub D."/>
            <person name="Lane L."/>
            <person name="Bairoch A."/>
            <person name="Van Dorsselaer A."/>
            <person name="Carapito C."/>
        </authorList>
    </citation>
    <scope>IDENTIFICATION BY MASS SPECTROMETRY [LARGE SCALE ANALYSIS]</scope>
</reference>
<reference key="9">
    <citation type="journal article" date="2017" name="Elife">
        <title>Identification and dynamics of the human ZDHHC16-ZDHHC6 palmitoylation cascade.</title>
        <authorList>
            <person name="Abrami L."/>
            <person name="Dallavilla T."/>
            <person name="Sandoz P.A."/>
            <person name="Demir M."/>
            <person name="Kunz B."/>
            <person name="Savoglidis G."/>
            <person name="Hatzimanikatis V."/>
            <person name="van der Goot F.G."/>
        </authorList>
    </citation>
    <scope>FUNCTION</scope>
    <scope>CATALYTIC ACTIVITY</scope>
    <scope>PALMITOYLATION AT CYS-2</scope>
    <scope>MUTAGENESIS OF CYS-2 AND SER-122</scope>
</reference>
<keyword id="KW-0002">3D-structure</keyword>
<keyword id="KW-0963">Cytoplasm</keyword>
<keyword id="KW-0276">Fatty acid metabolism</keyword>
<keyword id="KW-0378">Hydrolase</keyword>
<keyword id="KW-0443">Lipid metabolism</keyword>
<keyword id="KW-0449">Lipoprotein</keyword>
<keyword id="KW-0564">Palmitate</keyword>
<keyword id="KW-0597">Phosphoprotein</keyword>
<keyword id="KW-1267">Proteomics identification</keyword>
<keyword id="KW-1185">Reference proteome</keyword>
<accession>O95372</accession>
<accession>Q7Z4Z2</accession>